<organism>
    <name type="scientific">Escherichia coli (strain 55989 / EAEC)</name>
    <dbReference type="NCBI Taxonomy" id="585055"/>
    <lineage>
        <taxon>Bacteria</taxon>
        <taxon>Pseudomonadati</taxon>
        <taxon>Pseudomonadota</taxon>
        <taxon>Gammaproteobacteria</taxon>
        <taxon>Enterobacterales</taxon>
        <taxon>Enterobacteriaceae</taxon>
        <taxon>Escherichia</taxon>
    </lineage>
</organism>
<gene>
    <name evidence="1" type="primary">yacL</name>
    <name type="ordered locus">EC55989_0112</name>
</gene>
<keyword id="KW-1185">Reference proteome</keyword>
<dbReference type="EMBL" id="CU928145">
    <property type="protein sequence ID" value="CAU96000.1"/>
    <property type="molecule type" value="Genomic_DNA"/>
</dbReference>
<dbReference type="RefSeq" id="WP_000384306.1">
    <property type="nucleotide sequence ID" value="NZ_CP028304.1"/>
</dbReference>
<dbReference type="GeneID" id="93777317"/>
<dbReference type="KEGG" id="eck:EC55989_0112"/>
<dbReference type="HOGENOM" id="CLU_139226_0_0_6"/>
<dbReference type="Proteomes" id="UP000000746">
    <property type="component" value="Chromosome"/>
</dbReference>
<dbReference type="HAMAP" id="MF_01053">
    <property type="entry name" value="UPF0231"/>
    <property type="match status" value="1"/>
</dbReference>
<dbReference type="InterPro" id="IPR008249">
    <property type="entry name" value="UPF0231"/>
</dbReference>
<dbReference type="NCBIfam" id="NF003574">
    <property type="entry name" value="PRK05248.1-1"/>
    <property type="match status" value="1"/>
</dbReference>
<dbReference type="NCBIfam" id="NF003576">
    <property type="entry name" value="PRK05248.1-3"/>
    <property type="match status" value="1"/>
</dbReference>
<dbReference type="Pfam" id="PF06062">
    <property type="entry name" value="UPF0231"/>
    <property type="match status" value="1"/>
</dbReference>
<dbReference type="PIRSF" id="PIRSF006287">
    <property type="entry name" value="UCP006287"/>
    <property type="match status" value="1"/>
</dbReference>
<sequence>MDYEFLRDITGVVKVRMSMGHEVVGHWFNEEVKENLALLDEVEQAAHALKGSERSWQRAGHEYTLWMDGEEVMVRANQLEFAGDEMEEGMNYYDEESLSLCGVEDFLQVVAAYRNFVQQK</sequence>
<name>YACL_ECO55</name>
<feature type="chain" id="PRO_1000149631" description="UPF0231 protein YacL">
    <location>
        <begin position="1"/>
        <end position="120"/>
    </location>
</feature>
<proteinExistence type="inferred from homology"/>
<reference key="1">
    <citation type="journal article" date="2009" name="PLoS Genet.">
        <title>Organised genome dynamics in the Escherichia coli species results in highly diverse adaptive paths.</title>
        <authorList>
            <person name="Touchon M."/>
            <person name="Hoede C."/>
            <person name="Tenaillon O."/>
            <person name="Barbe V."/>
            <person name="Baeriswyl S."/>
            <person name="Bidet P."/>
            <person name="Bingen E."/>
            <person name="Bonacorsi S."/>
            <person name="Bouchier C."/>
            <person name="Bouvet O."/>
            <person name="Calteau A."/>
            <person name="Chiapello H."/>
            <person name="Clermont O."/>
            <person name="Cruveiller S."/>
            <person name="Danchin A."/>
            <person name="Diard M."/>
            <person name="Dossat C."/>
            <person name="Karoui M.E."/>
            <person name="Frapy E."/>
            <person name="Garry L."/>
            <person name="Ghigo J.M."/>
            <person name="Gilles A.M."/>
            <person name="Johnson J."/>
            <person name="Le Bouguenec C."/>
            <person name="Lescat M."/>
            <person name="Mangenot S."/>
            <person name="Martinez-Jehanne V."/>
            <person name="Matic I."/>
            <person name="Nassif X."/>
            <person name="Oztas S."/>
            <person name="Petit M.A."/>
            <person name="Pichon C."/>
            <person name="Rouy Z."/>
            <person name="Ruf C.S."/>
            <person name="Schneider D."/>
            <person name="Tourret J."/>
            <person name="Vacherie B."/>
            <person name="Vallenet D."/>
            <person name="Medigue C."/>
            <person name="Rocha E.P.C."/>
            <person name="Denamur E."/>
        </authorList>
    </citation>
    <scope>NUCLEOTIDE SEQUENCE [LARGE SCALE GENOMIC DNA]</scope>
    <source>
        <strain>55989 / EAEC</strain>
    </source>
</reference>
<accession>B7LFY6</accession>
<evidence type="ECO:0000255" key="1">
    <source>
        <dbReference type="HAMAP-Rule" id="MF_01053"/>
    </source>
</evidence>
<comment type="similarity">
    <text evidence="1">Belongs to the UPF0231 family.</text>
</comment>
<protein>
    <recommendedName>
        <fullName evidence="1">UPF0231 protein YacL</fullName>
    </recommendedName>
</protein>